<accession>A2SUH3</accession>
<proteinExistence type="evidence at transcript level"/>
<organism>
    <name type="scientific">Monascus pilosus</name>
    <name type="common">Red mold</name>
    <dbReference type="NCBI Taxonomy" id="89488"/>
    <lineage>
        <taxon>Eukaryota</taxon>
        <taxon>Fungi</taxon>
        <taxon>Dikarya</taxon>
        <taxon>Ascomycota</taxon>
        <taxon>Pezizomycotina</taxon>
        <taxon>Eurotiomycetes</taxon>
        <taxon>Eurotiomycetidae</taxon>
        <taxon>Eurotiales</taxon>
        <taxon>Aspergillaceae</taxon>
        <taxon>Monascus</taxon>
    </lineage>
</organism>
<name>LAEA_MONPI</name>
<comment type="function">
    <text evidence="1 3 4">Methyltransferase that performs automethylation (By similarity). No other methyl-accepting substrate has been identified yet (By similarity). Component of the velvet transcription factor complex that acts as a global regulator for secondary metabolite gene expression (PubMed:23727802). Controls the expression of the monacolin K gene clusters (PubMed:19368389, PubMed:23727802). Also regulates pigmentation (PubMed:23727802).</text>
</comment>
<comment type="catalytic activity">
    <reaction evidence="1">
        <text>L-methionyl-[protein] + S-adenosyl-L-methionine = S-methyl-L-methionyl-[protein] + S-adenosyl-L-homocysteine</text>
        <dbReference type="Rhea" id="RHEA:60560"/>
        <dbReference type="Rhea" id="RHEA-COMP:12313"/>
        <dbReference type="Rhea" id="RHEA-COMP:15592"/>
        <dbReference type="ChEBI" id="CHEBI:16044"/>
        <dbReference type="ChEBI" id="CHEBI:57856"/>
        <dbReference type="ChEBI" id="CHEBI:59789"/>
        <dbReference type="ChEBI" id="CHEBI:142742"/>
    </reaction>
    <physiologicalReaction direction="left-to-right" evidence="1">
        <dbReference type="Rhea" id="RHEA:60561"/>
    </physiologicalReaction>
</comment>
<comment type="subunit">
    <text evidence="1">Component of the heterotrimeric velvet complex composed of laeA, veA and velB; VeA acting as a bridging protein between laeA and velB (By similarity).</text>
</comment>
<comment type="subcellular location">
    <subcellularLocation>
        <location evidence="1">Nucleus</location>
    </subcellularLocation>
</comment>
<comment type="induction">
    <text evidence="3">Alternative splicing of the pre-mRNA occurs in the 5'-untranslated region (5'-UTR) (PubMed:19368389). The shorter mRNA is constitutive transcript at all growth stages and different carbon or nitrogen sources, but the glutamate and NaNO(3) as main nitrogen source can up-regulate the longer mRNA form (PubMed:19368389). The longer mRNA is probably not translated (PubMed:19368389).</text>
</comment>
<comment type="disruption phenotype">
    <text evidence="3">Decreases synthesis of monacolin K (PubMed:19368389).</text>
</comment>
<comment type="similarity">
    <text evidence="6">Belongs to the methyltransferase superfamily. LaeA methyltransferase family.</text>
</comment>
<dbReference type="EC" id="2.1.1.-" evidence="1"/>
<dbReference type="EMBL" id="DQ178028">
    <property type="protein sequence ID" value="ABA87010.1"/>
    <property type="molecule type" value="Genomic_DNA"/>
</dbReference>
<dbReference type="EMBL" id="DQ178028">
    <property type="protein sequence ID" value="ABA87011.1"/>
    <property type="molecule type" value="Genomic_DNA"/>
</dbReference>
<dbReference type="SMR" id="A2SUH3"/>
<dbReference type="GO" id="GO:0005634">
    <property type="term" value="C:nucleus"/>
    <property type="evidence" value="ECO:0007669"/>
    <property type="project" value="UniProtKB-SubCell"/>
</dbReference>
<dbReference type="GO" id="GO:0008168">
    <property type="term" value="F:methyltransferase activity"/>
    <property type="evidence" value="ECO:0007669"/>
    <property type="project" value="UniProtKB-KW"/>
</dbReference>
<dbReference type="GO" id="GO:0032259">
    <property type="term" value="P:methylation"/>
    <property type="evidence" value="ECO:0007669"/>
    <property type="project" value="UniProtKB-KW"/>
</dbReference>
<dbReference type="GO" id="GO:0030435">
    <property type="term" value="P:sporulation resulting in formation of a cellular spore"/>
    <property type="evidence" value="ECO:0007669"/>
    <property type="project" value="UniProtKB-KW"/>
</dbReference>
<dbReference type="CDD" id="cd02440">
    <property type="entry name" value="AdoMet_MTases"/>
    <property type="match status" value="1"/>
</dbReference>
<dbReference type="Gene3D" id="3.40.50.150">
    <property type="entry name" value="Vaccinia Virus protein VP39"/>
    <property type="match status" value="1"/>
</dbReference>
<dbReference type="InterPro" id="IPR029063">
    <property type="entry name" value="SAM-dependent_MTases_sf"/>
</dbReference>
<dbReference type="PANTHER" id="PTHR43591">
    <property type="entry name" value="METHYLTRANSFERASE"/>
    <property type="match status" value="1"/>
</dbReference>
<dbReference type="PANTHER" id="PTHR43591:SF30">
    <property type="entry name" value="PROTEIN-METHIONINE METHYLTRANSFERASE LAEA"/>
    <property type="match status" value="1"/>
</dbReference>
<dbReference type="Pfam" id="PF13489">
    <property type="entry name" value="Methyltransf_23"/>
    <property type="match status" value="1"/>
</dbReference>
<dbReference type="SUPFAM" id="SSF53335">
    <property type="entry name" value="S-adenosyl-L-methionine-dependent methyltransferases"/>
    <property type="match status" value="1"/>
</dbReference>
<gene>
    <name evidence="5" type="primary">laeA</name>
</gene>
<reference key="1">
    <citation type="journal article" date="2009" name="J. Agric. Food Chem.">
        <title>Development and media regulate alternative splicing of a methyltransferase pre-mRNA in Monascus pilosus.</title>
        <authorList>
            <person name="Zhang M.Y."/>
            <person name="Miyake T."/>
        </authorList>
    </citation>
    <scope>NUCLEOTIDE SEQUENCE [GENOMIC DNA]</scope>
    <scope>INDUCTION</scope>
    <scope>DISRUPTION PHENOTYPE</scope>
    <scope>FUNCTION</scope>
    <source>
        <strain>IFO4520</strain>
    </source>
</reference>
<reference key="2">
    <citation type="journal article" date="2013" name="J. Microbiol. Biotechnol.">
        <title>Strain improvement by overexpression of the laeA gene in Monascus pilosus for the production of monascus-fermented rice.</title>
        <authorList>
            <person name="Lee S.S."/>
            <person name="Lee J.H."/>
            <person name="Lee I."/>
        </authorList>
    </citation>
    <scope>FUNCTION</scope>
</reference>
<sequence>MFGQQQQQQPPPPAASAYLNHNSRWTPPNESAQPRRSSNAMDINAITDRDPAEGHPRSNHTSSSIGSPIDKSPETYPGHEENGRIYHGFRRGIYFLPCDDLEQDRLDIFHKVITVARVSDALIYSPHPRNGRFLDLGCGTGIWAIDVAQKYPDAFVVGVDLSPIQPLNSPRNCDFYAPFDFESPWALGEDSWDLIHMQLGCGSVVSWPSLYRRIFAHLRPGAWFEQVEIDFEPRCDDRSLEGLALHHWYQCLKQATEEAMRPLAHNPRETIRHLQEAGFTEIDHQIVGLPLNPWHQDEHEKTVARWYNLAICESIETFSLAPFTRFFGWPVDRIKRLVADVRSEAFNKDIHAYNILHIYQARKPISN</sequence>
<keyword id="KW-0489">Methyltransferase</keyword>
<keyword id="KW-0539">Nucleus</keyword>
<keyword id="KW-0949">S-adenosyl-L-methionine</keyword>
<keyword id="KW-0749">Sporulation</keyword>
<keyword id="KW-0804">Transcription</keyword>
<keyword id="KW-0805">Transcription regulation</keyword>
<keyword id="KW-0808">Transferase</keyword>
<evidence type="ECO:0000250" key="1">
    <source>
        <dbReference type="UniProtKB" id="C8VQG9"/>
    </source>
</evidence>
<evidence type="ECO:0000256" key="2">
    <source>
        <dbReference type="SAM" id="MobiDB-lite"/>
    </source>
</evidence>
<evidence type="ECO:0000269" key="3">
    <source>
    </source>
</evidence>
<evidence type="ECO:0000269" key="4">
    <source>
    </source>
</evidence>
<evidence type="ECO:0000303" key="5">
    <source>
    </source>
</evidence>
<evidence type="ECO:0000305" key="6"/>
<feature type="chain" id="PRO_0000435758" description="Secondary metabolism regulator laeA">
    <location>
        <begin position="1"/>
        <end position="367"/>
    </location>
</feature>
<feature type="region of interest" description="Disordered" evidence="2">
    <location>
        <begin position="1"/>
        <end position="82"/>
    </location>
</feature>
<feature type="compositionally biased region" description="Polar residues" evidence="2">
    <location>
        <begin position="19"/>
        <end position="41"/>
    </location>
</feature>
<feature type="compositionally biased region" description="Basic and acidic residues" evidence="2">
    <location>
        <begin position="47"/>
        <end position="56"/>
    </location>
</feature>
<feature type="compositionally biased region" description="Basic and acidic residues" evidence="2">
    <location>
        <begin position="71"/>
        <end position="82"/>
    </location>
</feature>
<protein>
    <recommendedName>
        <fullName evidence="6">Secondary metabolism regulator laeA</fullName>
    </recommendedName>
    <alternativeName>
        <fullName evidence="6">Methyltransferase laeA</fullName>
        <ecNumber evidence="1">2.1.1.-</ecNumber>
    </alternativeName>
    <alternativeName>
        <fullName evidence="6">Velvet complex subunit laeA</fullName>
    </alternativeName>
</protein>